<dbReference type="EC" id="1.8.4.11" evidence="1"/>
<dbReference type="EMBL" id="CP001279">
    <property type="protein sequence ID" value="ACM93298.1"/>
    <property type="molecule type" value="Genomic_DNA"/>
</dbReference>
<dbReference type="RefSeq" id="WP_015902350.1">
    <property type="nucleotide sequence ID" value="NC_012115.1"/>
</dbReference>
<dbReference type="SMR" id="B9LA36"/>
<dbReference type="STRING" id="598659.NAMH_1097"/>
<dbReference type="KEGG" id="nam:NAMH_1097"/>
<dbReference type="eggNOG" id="COG0225">
    <property type="taxonomic scope" value="Bacteria"/>
</dbReference>
<dbReference type="HOGENOM" id="CLU_031040_10_0_7"/>
<dbReference type="OrthoDB" id="4174719at2"/>
<dbReference type="Proteomes" id="UP000000448">
    <property type="component" value="Chromosome"/>
</dbReference>
<dbReference type="GO" id="GO:0033744">
    <property type="term" value="F:L-methionine:thioredoxin-disulfide S-oxidoreductase activity"/>
    <property type="evidence" value="ECO:0007669"/>
    <property type="project" value="RHEA"/>
</dbReference>
<dbReference type="GO" id="GO:0008113">
    <property type="term" value="F:peptide-methionine (S)-S-oxide reductase activity"/>
    <property type="evidence" value="ECO:0007669"/>
    <property type="project" value="UniProtKB-UniRule"/>
</dbReference>
<dbReference type="GO" id="GO:0036211">
    <property type="term" value="P:protein modification process"/>
    <property type="evidence" value="ECO:0007669"/>
    <property type="project" value="UniProtKB-UniRule"/>
</dbReference>
<dbReference type="Gene3D" id="3.30.1060.10">
    <property type="entry name" value="Peptide methionine sulphoxide reductase MsrA"/>
    <property type="match status" value="1"/>
</dbReference>
<dbReference type="HAMAP" id="MF_01401">
    <property type="entry name" value="MsrA"/>
    <property type="match status" value="1"/>
</dbReference>
<dbReference type="InterPro" id="IPR002569">
    <property type="entry name" value="Met_Sox_Rdtase_MsrA_dom"/>
</dbReference>
<dbReference type="InterPro" id="IPR036509">
    <property type="entry name" value="Met_Sox_Rdtase_MsrA_sf"/>
</dbReference>
<dbReference type="NCBIfam" id="TIGR00401">
    <property type="entry name" value="msrA"/>
    <property type="match status" value="1"/>
</dbReference>
<dbReference type="PANTHER" id="PTHR43774">
    <property type="entry name" value="PEPTIDE METHIONINE SULFOXIDE REDUCTASE"/>
    <property type="match status" value="1"/>
</dbReference>
<dbReference type="PANTHER" id="PTHR43774:SF1">
    <property type="entry name" value="PEPTIDE METHIONINE SULFOXIDE REDUCTASE MSRA 2"/>
    <property type="match status" value="1"/>
</dbReference>
<dbReference type="Pfam" id="PF01625">
    <property type="entry name" value="PMSR"/>
    <property type="match status" value="1"/>
</dbReference>
<dbReference type="SUPFAM" id="SSF55068">
    <property type="entry name" value="Peptide methionine sulfoxide reductase"/>
    <property type="match status" value="1"/>
</dbReference>
<reference key="1">
    <citation type="journal article" date="2009" name="PLoS Genet.">
        <title>Adaptations to submarine hydrothermal environments exemplified by the genome of Nautilia profundicola.</title>
        <authorList>
            <person name="Campbell B.J."/>
            <person name="Smith J.L."/>
            <person name="Hanson T.E."/>
            <person name="Klotz M.G."/>
            <person name="Stein L.Y."/>
            <person name="Lee C.K."/>
            <person name="Wu D."/>
            <person name="Robinson J.M."/>
            <person name="Khouri H.M."/>
            <person name="Eisen J.A."/>
            <person name="Cary S.C."/>
        </authorList>
    </citation>
    <scope>NUCLEOTIDE SEQUENCE [LARGE SCALE GENOMIC DNA]</scope>
    <source>
        <strain>ATCC BAA-1463 / DSM 18972 / AmH</strain>
    </source>
</reference>
<accession>B9LA36</accession>
<name>MSRA_NAUPA</name>
<comment type="function">
    <text evidence="1">Has an important function as a repair enzyme for proteins that have been inactivated by oxidation. Catalyzes the reversible oxidation-reduction of methionine sulfoxide in proteins to methionine.</text>
</comment>
<comment type="catalytic activity">
    <reaction evidence="1">
        <text>L-methionyl-[protein] + [thioredoxin]-disulfide + H2O = L-methionyl-(S)-S-oxide-[protein] + [thioredoxin]-dithiol</text>
        <dbReference type="Rhea" id="RHEA:14217"/>
        <dbReference type="Rhea" id="RHEA-COMP:10698"/>
        <dbReference type="Rhea" id="RHEA-COMP:10700"/>
        <dbReference type="Rhea" id="RHEA-COMP:12313"/>
        <dbReference type="Rhea" id="RHEA-COMP:12315"/>
        <dbReference type="ChEBI" id="CHEBI:15377"/>
        <dbReference type="ChEBI" id="CHEBI:16044"/>
        <dbReference type="ChEBI" id="CHEBI:29950"/>
        <dbReference type="ChEBI" id="CHEBI:44120"/>
        <dbReference type="ChEBI" id="CHEBI:50058"/>
        <dbReference type="EC" id="1.8.4.11"/>
    </reaction>
</comment>
<comment type="catalytic activity">
    <reaction evidence="1">
        <text>[thioredoxin]-disulfide + L-methionine + H2O = L-methionine (S)-S-oxide + [thioredoxin]-dithiol</text>
        <dbReference type="Rhea" id="RHEA:19993"/>
        <dbReference type="Rhea" id="RHEA-COMP:10698"/>
        <dbReference type="Rhea" id="RHEA-COMP:10700"/>
        <dbReference type="ChEBI" id="CHEBI:15377"/>
        <dbReference type="ChEBI" id="CHEBI:29950"/>
        <dbReference type="ChEBI" id="CHEBI:50058"/>
        <dbReference type="ChEBI" id="CHEBI:57844"/>
        <dbReference type="ChEBI" id="CHEBI:58772"/>
        <dbReference type="EC" id="1.8.4.11"/>
    </reaction>
</comment>
<comment type="similarity">
    <text evidence="1">Belongs to the MsrA Met sulfoxide reductase family.</text>
</comment>
<proteinExistence type="inferred from homology"/>
<keyword id="KW-0560">Oxidoreductase</keyword>
<sequence>MPKAVFGGGCFWCLDAVFRKVDGVRDVVVGYAGGRRPNPNYEQVCTGVTGHAEVVEIDYDENTVSYDELLDIFFKIHDPTQLNRQGNDVGTQYRSIILYLDEEQKEKALKKIEELKKEGLNVVTEVKPLEIFYPAEKYHQNYFAKNPHQPYCMYVVAPKVEKYLKIKNENKKT</sequence>
<feature type="chain" id="PRO_1000184568" description="Peptide methionine sulfoxide reductase MsrA">
    <location>
        <begin position="1"/>
        <end position="173"/>
    </location>
</feature>
<feature type="active site" evidence="1">
    <location>
        <position position="10"/>
    </location>
</feature>
<evidence type="ECO:0000255" key="1">
    <source>
        <dbReference type="HAMAP-Rule" id="MF_01401"/>
    </source>
</evidence>
<organism>
    <name type="scientific">Nautilia profundicola (strain ATCC BAA-1463 / DSM 18972 / AmH)</name>
    <dbReference type="NCBI Taxonomy" id="598659"/>
    <lineage>
        <taxon>Bacteria</taxon>
        <taxon>Pseudomonadati</taxon>
        <taxon>Campylobacterota</taxon>
        <taxon>Epsilonproteobacteria</taxon>
        <taxon>Nautiliales</taxon>
        <taxon>Nautiliaceae</taxon>
        <taxon>Nautilia</taxon>
    </lineage>
</organism>
<gene>
    <name evidence="1" type="primary">msrA</name>
    <name type="ordered locus">NAMH_1097</name>
</gene>
<protein>
    <recommendedName>
        <fullName evidence="1">Peptide methionine sulfoxide reductase MsrA</fullName>
        <shortName evidence="1">Protein-methionine-S-oxide reductase</shortName>
        <ecNumber evidence="1">1.8.4.11</ecNumber>
    </recommendedName>
    <alternativeName>
        <fullName evidence="1">Peptide-methionine (S)-S-oxide reductase</fullName>
        <shortName evidence="1">Peptide Met(O) reductase</shortName>
    </alternativeName>
</protein>